<keyword id="KW-0067">ATP-binding</keyword>
<keyword id="KW-0963">Cytoplasm</keyword>
<keyword id="KW-0256">Endoplasmic reticulum</keyword>
<keyword id="KW-0378">Hydrolase</keyword>
<keyword id="KW-0479">Metal-binding</keyword>
<keyword id="KW-0547">Nucleotide-binding</keyword>
<keyword id="KW-1185">Reference proteome</keyword>
<keyword id="KW-0813">Transport</keyword>
<keyword id="KW-0862">Zinc</keyword>
<feature type="chain" id="PRO_0000388180" description="ATPase ASNA1 homolog">
    <location>
        <begin position="1"/>
        <end position="359"/>
    </location>
</feature>
<feature type="active site" evidence="1">
    <location>
        <position position="63"/>
    </location>
</feature>
<feature type="binding site" evidence="1">
    <location>
        <begin position="23"/>
        <end position="30"/>
    </location>
    <ligand>
        <name>ATP</name>
        <dbReference type="ChEBI" id="CHEBI:30616"/>
    </ligand>
</feature>
<feature type="binding site" evidence="1">
    <location>
        <position position="252"/>
    </location>
    <ligand>
        <name>ATP</name>
        <dbReference type="ChEBI" id="CHEBI:30616"/>
    </ligand>
</feature>
<feature type="binding site" evidence="1">
    <location>
        <position position="279"/>
    </location>
    <ligand>
        <name>ATP</name>
        <dbReference type="ChEBI" id="CHEBI:30616"/>
    </ligand>
</feature>
<feature type="binding site" evidence="1">
    <location>
        <position position="291"/>
    </location>
    <ligand>
        <name>Zn(2+)</name>
        <dbReference type="ChEBI" id="CHEBI:29105"/>
        <note>ligand shared between dimeric partners</note>
    </ligand>
</feature>
<feature type="binding site" evidence="1">
    <location>
        <position position="294"/>
    </location>
    <ligand>
        <name>Zn(2+)</name>
        <dbReference type="ChEBI" id="CHEBI:29105"/>
        <note>ligand shared between dimeric partners</note>
    </ligand>
</feature>
<sequence length="359" mass="39244">MSLEPTLRDLLHSKLQWIFVGGKGGVGKTTTSCALATLFASTPVHDAVTNTTRPRRVLLISTDPAHNLSDAFSQKFGKTPVPVNGMEETLFAMEVDPTTFTHGGFGAMLGFPGHIATDADAPSPFAALGNILKEAAGTLPGIDELSVFAEILRGVQQLSYDVVIFDTAPTGHTLRLLALPHTLNSTMEKLLSVEGLNTLIQAASAVLSSTTNLGDMSSLMPAFKQWRENVQEVQRQFTDAEKTAFICVCIPEFLSVYETERLVQELMKYDISCDSIVVNQLVLKPSSEPDCRMCNARQKIQSKYLAQIDSLYEDFHVVKMPLLSDEVRGVPALQRFAQFLLEPYDADRHGYIDVCGAAS</sequence>
<evidence type="ECO:0000255" key="1">
    <source>
        <dbReference type="HAMAP-Rule" id="MF_03112"/>
    </source>
</evidence>
<proteinExistence type="inferred from homology"/>
<reference key="1">
    <citation type="journal article" date="2005" name="Science">
        <title>The genome sequence of Trypanosoma cruzi, etiologic agent of Chagas disease.</title>
        <authorList>
            <person name="El-Sayed N.M.A."/>
            <person name="Myler P.J."/>
            <person name="Bartholomeu D.C."/>
            <person name="Nilsson D."/>
            <person name="Aggarwal G."/>
            <person name="Tran A.-N."/>
            <person name="Ghedin E."/>
            <person name="Worthey E.A."/>
            <person name="Delcher A.L."/>
            <person name="Blandin G."/>
            <person name="Westenberger S.J."/>
            <person name="Caler E."/>
            <person name="Cerqueira G.C."/>
            <person name="Branche C."/>
            <person name="Haas B."/>
            <person name="Anupama A."/>
            <person name="Arner E."/>
            <person name="Aslund L."/>
            <person name="Attipoe P."/>
            <person name="Bontempi E."/>
            <person name="Bringaud F."/>
            <person name="Burton P."/>
            <person name="Cadag E."/>
            <person name="Campbell D.A."/>
            <person name="Carrington M."/>
            <person name="Crabtree J."/>
            <person name="Darban H."/>
            <person name="da Silveira J.F."/>
            <person name="de Jong P."/>
            <person name="Edwards K."/>
            <person name="Englund P.T."/>
            <person name="Fazelina G."/>
            <person name="Feldblyum T."/>
            <person name="Ferella M."/>
            <person name="Frasch A.C."/>
            <person name="Gull K."/>
            <person name="Horn D."/>
            <person name="Hou L."/>
            <person name="Huang Y."/>
            <person name="Kindlund E."/>
            <person name="Klingbeil M."/>
            <person name="Kluge S."/>
            <person name="Koo H."/>
            <person name="Lacerda D."/>
            <person name="Levin M.J."/>
            <person name="Lorenzi H."/>
            <person name="Louie T."/>
            <person name="Machado C.R."/>
            <person name="McCulloch R."/>
            <person name="McKenna A."/>
            <person name="Mizuno Y."/>
            <person name="Mottram J.C."/>
            <person name="Nelson S."/>
            <person name="Ochaya S."/>
            <person name="Osoegawa K."/>
            <person name="Pai G."/>
            <person name="Parsons M."/>
            <person name="Pentony M."/>
            <person name="Pettersson U."/>
            <person name="Pop M."/>
            <person name="Ramirez J.L."/>
            <person name="Rinta J."/>
            <person name="Robertson L."/>
            <person name="Salzberg S.L."/>
            <person name="Sanchez D.O."/>
            <person name="Seyler A."/>
            <person name="Sharma R."/>
            <person name="Shetty J."/>
            <person name="Simpson A.J."/>
            <person name="Sisk E."/>
            <person name="Tammi M.T."/>
            <person name="Tarleton R."/>
            <person name="Teixeira S."/>
            <person name="Van Aken S."/>
            <person name="Vogt C."/>
            <person name="Ward P.N."/>
            <person name="Wickstead B."/>
            <person name="Wortman J."/>
            <person name="White O."/>
            <person name="Fraser C.M."/>
            <person name="Stuart K.D."/>
            <person name="Andersson B."/>
        </authorList>
    </citation>
    <scope>NUCLEOTIDE SEQUENCE [LARGE SCALE GENOMIC DNA]</scope>
    <source>
        <strain>CL Brener</strain>
    </source>
</reference>
<comment type="function">
    <text evidence="1">ATPase required for the post-translational delivery of tail-anchored (TA) proteins to the endoplasmic reticulum. Recognizes and selectively binds the transmembrane domain of TA proteins in the cytosol. This complex then targets to the endoplasmic reticulum by membrane-bound receptors, where the tail-anchored protein is released for insertion. This process is regulated by ATP binding and hydrolysis. ATP binding drives the homodimer towards the closed dimer state, facilitating recognition of newly synthesized TA membrane proteins. ATP hydrolysis is required for insertion. Subsequently, the homodimer reverts towards the open dimer state, lowering its affinity for the membrane-bound receptor, and returning it to the cytosol to initiate a new round of targeting.</text>
</comment>
<comment type="subunit">
    <text evidence="1">Homodimer.</text>
</comment>
<comment type="subcellular location">
    <subcellularLocation>
        <location evidence="1">Cytoplasm</location>
    </subcellularLocation>
    <subcellularLocation>
        <location evidence="1">Endoplasmic reticulum</location>
    </subcellularLocation>
</comment>
<comment type="similarity">
    <text evidence="1">Belongs to the arsA ATPase family.</text>
</comment>
<dbReference type="EC" id="3.6.-.-" evidence="1"/>
<dbReference type="EMBL" id="AAHK01002975">
    <property type="protein sequence ID" value="EAN81826.1"/>
    <property type="molecule type" value="Genomic_DNA"/>
</dbReference>
<dbReference type="EMBL" id="AAHK01000021">
    <property type="protein sequence ID" value="EAN99406.1"/>
    <property type="molecule type" value="Genomic_DNA"/>
</dbReference>
<dbReference type="RefSeq" id="XP_803272.1">
    <property type="nucleotide sequence ID" value="XM_798179.1"/>
</dbReference>
<dbReference type="RefSeq" id="XP_821257.1">
    <property type="nucleotide sequence ID" value="XM_816164.1"/>
</dbReference>
<dbReference type="SMR" id="Q4CNH2"/>
<dbReference type="FunCoup" id="Q4CNH2">
    <property type="interactions" value="681"/>
</dbReference>
<dbReference type="STRING" id="353153.Q4CNH2"/>
<dbReference type="PaxDb" id="353153-Q4CNH2"/>
<dbReference type="EnsemblProtists" id="EAN81826">
    <property type="protein sequence ID" value="EAN81826"/>
    <property type="gene ID" value="Tc00.1047053507763.30"/>
</dbReference>
<dbReference type="EnsemblProtists" id="EAN99406">
    <property type="protein sequence ID" value="EAN99406"/>
    <property type="gene ID" value="Tc00.1047053510101.490"/>
</dbReference>
<dbReference type="GeneID" id="3532867"/>
<dbReference type="GeneID" id="3554103"/>
<dbReference type="KEGG" id="tcr:507763.30"/>
<dbReference type="KEGG" id="tcr:510101.490"/>
<dbReference type="eggNOG" id="KOG2825">
    <property type="taxonomic scope" value="Eukaryota"/>
</dbReference>
<dbReference type="InParanoid" id="Q4CNH2"/>
<dbReference type="OMA" id="GCEEEYA"/>
<dbReference type="Proteomes" id="UP000002296">
    <property type="component" value="Unassembled WGS sequence"/>
</dbReference>
<dbReference type="GO" id="GO:0043529">
    <property type="term" value="C:GET complex"/>
    <property type="evidence" value="ECO:0007669"/>
    <property type="project" value="TreeGrafter"/>
</dbReference>
<dbReference type="GO" id="GO:0005524">
    <property type="term" value="F:ATP binding"/>
    <property type="evidence" value="ECO:0007669"/>
    <property type="project" value="UniProtKB-UniRule"/>
</dbReference>
<dbReference type="GO" id="GO:0016887">
    <property type="term" value="F:ATP hydrolysis activity"/>
    <property type="evidence" value="ECO:0007669"/>
    <property type="project" value="InterPro"/>
</dbReference>
<dbReference type="GO" id="GO:0046872">
    <property type="term" value="F:metal ion binding"/>
    <property type="evidence" value="ECO:0007669"/>
    <property type="project" value="UniProtKB-KW"/>
</dbReference>
<dbReference type="GO" id="GO:0071816">
    <property type="term" value="P:tail-anchored membrane protein insertion into ER membrane"/>
    <property type="evidence" value="ECO:0007669"/>
    <property type="project" value="TreeGrafter"/>
</dbReference>
<dbReference type="CDD" id="cd02035">
    <property type="entry name" value="ArsA"/>
    <property type="match status" value="1"/>
</dbReference>
<dbReference type="FunFam" id="3.40.50.300:FF:001459">
    <property type="entry name" value="ATPase ASNA1 homolog"/>
    <property type="match status" value="1"/>
</dbReference>
<dbReference type="Gene3D" id="3.40.50.300">
    <property type="entry name" value="P-loop containing nucleotide triphosphate hydrolases"/>
    <property type="match status" value="1"/>
</dbReference>
<dbReference type="HAMAP" id="MF_03112">
    <property type="entry name" value="Asna1_Get3"/>
    <property type="match status" value="1"/>
</dbReference>
<dbReference type="InterPro" id="IPR025723">
    <property type="entry name" value="Anion-transp_ATPase-like_dom"/>
</dbReference>
<dbReference type="InterPro" id="IPR016300">
    <property type="entry name" value="ATPase_ArsA/GET3"/>
</dbReference>
<dbReference type="InterPro" id="IPR027542">
    <property type="entry name" value="ATPase_ArsA/GET3_euk"/>
</dbReference>
<dbReference type="InterPro" id="IPR027417">
    <property type="entry name" value="P-loop_NTPase"/>
</dbReference>
<dbReference type="NCBIfam" id="TIGR00345">
    <property type="entry name" value="GET3_arsA_TRC40"/>
    <property type="match status" value="1"/>
</dbReference>
<dbReference type="PANTHER" id="PTHR10803">
    <property type="entry name" value="ARSENICAL PUMP-DRIVING ATPASE ARSENITE-TRANSLOCATING ATPASE"/>
    <property type="match status" value="1"/>
</dbReference>
<dbReference type="PANTHER" id="PTHR10803:SF3">
    <property type="entry name" value="ATPASE GET3"/>
    <property type="match status" value="1"/>
</dbReference>
<dbReference type="Pfam" id="PF02374">
    <property type="entry name" value="ArsA_ATPase"/>
    <property type="match status" value="1"/>
</dbReference>
<dbReference type="SUPFAM" id="SSF52540">
    <property type="entry name" value="P-loop containing nucleoside triphosphate hydrolases"/>
    <property type="match status" value="1"/>
</dbReference>
<protein>
    <recommendedName>
        <fullName evidence="1">ATPase ASNA1 homolog</fullName>
        <ecNumber evidence="1">3.6.-.-</ecNumber>
    </recommendedName>
    <alternativeName>
        <fullName evidence="1">Arsenical pump-driving ATPase homolog</fullName>
    </alternativeName>
    <alternativeName>
        <fullName evidence="1">Arsenite-stimulated ATPase</fullName>
    </alternativeName>
</protein>
<name>ASNA_TRYCC</name>
<accession>Q4CNH2</accession>
<gene>
    <name type="ORF">Tc00.1047053507763.30</name>
</gene>
<gene>
    <name type="ORF">Tc00.1047053510101.490</name>
</gene>
<organism>
    <name type="scientific">Trypanosoma cruzi (strain CL Brener)</name>
    <dbReference type="NCBI Taxonomy" id="353153"/>
    <lineage>
        <taxon>Eukaryota</taxon>
        <taxon>Discoba</taxon>
        <taxon>Euglenozoa</taxon>
        <taxon>Kinetoplastea</taxon>
        <taxon>Metakinetoplastina</taxon>
        <taxon>Trypanosomatida</taxon>
        <taxon>Trypanosomatidae</taxon>
        <taxon>Trypanosoma</taxon>
        <taxon>Schizotrypanum</taxon>
    </lineage>
</organism>